<feature type="chain" id="PRO_0000079897" description="Down-regulator of invasive growth 1">
    <location>
        <begin position="1"/>
        <end position="452"/>
    </location>
</feature>
<feature type="region of interest" description="Disordered" evidence="1">
    <location>
        <begin position="1"/>
        <end position="145"/>
    </location>
</feature>
<feature type="region of interest" description="Interaction with FUS3 and KSS1" evidence="6">
    <location>
        <begin position="212"/>
        <end position="452"/>
    </location>
</feature>
<feature type="region of interest" description="Disordered" evidence="1">
    <location>
        <begin position="262"/>
        <end position="311"/>
    </location>
</feature>
<feature type="region of interest" description="Disordered" evidence="1">
    <location>
        <begin position="331"/>
        <end position="395"/>
    </location>
</feature>
<feature type="compositionally biased region" description="Polar residues" evidence="1">
    <location>
        <begin position="12"/>
        <end position="22"/>
    </location>
</feature>
<feature type="compositionally biased region" description="Polar residues" evidence="1">
    <location>
        <begin position="35"/>
        <end position="53"/>
    </location>
</feature>
<feature type="compositionally biased region" description="Acidic residues" evidence="1">
    <location>
        <begin position="61"/>
        <end position="77"/>
    </location>
</feature>
<feature type="compositionally biased region" description="Basic residues" evidence="1">
    <location>
        <begin position="81"/>
        <end position="100"/>
    </location>
</feature>
<feature type="compositionally biased region" description="Polar residues" evidence="1">
    <location>
        <begin position="107"/>
        <end position="116"/>
    </location>
</feature>
<feature type="compositionally biased region" description="Polar residues" evidence="1">
    <location>
        <begin position="124"/>
        <end position="145"/>
    </location>
</feature>
<feature type="compositionally biased region" description="Polar residues" evidence="1">
    <location>
        <begin position="269"/>
        <end position="281"/>
    </location>
</feature>
<feature type="compositionally biased region" description="Polar residues" evidence="1">
    <location>
        <begin position="291"/>
        <end position="307"/>
    </location>
</feature>
<feature type="compositionally biased region" description="Low complexity" evidence="1">
    <location>
        <begin position="331"/>
        <end position="348"/>
    </location>
</feature>
<feature type="compositionally biased region" description="Basic and acidic residues" evidence="1">
    <location>
        <begin position="349"/>
        <end position="361"/>
    </location>
</feature>
<feature type="compositionally biased region" description="Acidic residues" evidence="1">
    <location>
        <begin position="362"/>
        <end position="372"/>
    </location>
</feature>
<feature type="compositionally biased region" description="Low complexity" evidence="1">
    <location>
        <begin position="378"/>
        <end position="395"/>
    </location>
</feature>
<feature type="modified residue" description="Phosphoserine" evidence="13">
    <location>
        <position position="45"/>
    </location>
</feature>
<feature type="modified residue" description="Phosphoserine" evidence="13">
    <location>
        <position position="126"/>
    </location>
</feature>
<feature type="modified residue" description="Phosphoserine" evidence="12">
    <location>
        <position position="142"/>
    </location>
</feature>
<feature type="modified residue" description="Phosphoserine" evidence="11 12 13">
    <location>
        <position position="272"/>
    </location>
</feature>
<feature type="modified residue" description="Phosphoserine" evidence="11">
    <location>
        <position position="275"/>
    </location>
</feature>
<feature type="modified residue" description="Phosphoserine" evidence="12">
    <location>
        <position position="330"/>
    </location>
</feature>
<feature type="modified residue" description="Phosphothreonine" evidence="13">
    <location>
        <position position="379"/>
    </location>
</feature>
<feature type="modified residue" description="Phosphoserine" evidence="10">
    <location>
        <position position="395"/>
    </location>
</feature>
<feature type="modified residue" description="Phosphoserine" evidence="12">
    <location>
        <position position="428"/>
    </location>
</feature>
<name>DIG1_YEAST</name>
<proteinExistence type="evidence at protein level"/>
<evidence type="ECO:0000256" key="1">
    <source>
        <dbReference type="SAM" id="MobiDB-lite"/>
    </source>
</evidence>
<evidence type="ECO:0000269" key="2">
    <source>
    </source>
</evidence>
<evidence type="ECO:0000269" key="3">
    <source>
    </source>
</evidence>
<evidence type="ECO:0000269" key="4">
    <source>
    </source>
</evidence>
<evidence type="ECO:0000269" key="5">
    <source>
    </source>
</evidence>
<evidence type="ECO:0000269" key="6">
    <source>
    </source>
</evidence>
<evidence type="ECO:0000269" key="7">
    <source>
    </source>
</evidence>
<evidence type="ECO:0000269" key="8">
    <source>
    </source>
</evidence>
<evidence type="ECO:0000269" key="9">
    <source>
    </source>
</evidence>
<evidence type="ECO:0007744" key="10">
    <source>
    </source>
</evidence>
<evidence type="ECO:0007744" key="11">
    <source>
    </source>
</evidence>
<evidence type="ECO:0007744" key="12">
    <source>
    </source>
</evidence>
<evidence type="ECO:0007744" key="13">
    <source>
    </source>
</evidence>
<reference key="1">
    <citation type="journal article" date="1997" name="Nature">
        <title>The nucleotide sequence of Saccharomyces cerevisiae chromosome XVI.</title>
        <authorList>
            <person name="Bussey H."/>
            <person name="Storms R.K."/>
            <person name="Ahmed A."/>
            <person name="Albermann K."/>
            <person name="Allen E."/>
            <person name="Ansorge W."/>
            <person name="Araujo R."/>
            <person name="Aparicio A."/>
            <person name="Barrell B.G."/>
            <person name="Badcock K."/>
            <person name="Benes V."/>
            <person name="Botstein D."/>
            <person name="Bowman S."/>
            <person name="Brueckner M."/>
            <person name="Carpenter J."/>
            <person name="Cherry J.M."/>
            <person name="Chung E."/>
            <person name="Churcher C.M."/>
            <person name="Coster F."/>
            <person name="Davis K."/>
            <person name="Davis R.W."/>
            <person name="Dietrich F.S."/>
            <person name="Delius H."/>
            <person name="DiPaolo T."/>
            <person name="Dubois E."/>
            <person name="Duesterhoeft A."/>
            <person name="Duncan M."/>
            <person name="Floeth M."/>
            <person name="Fortin N."/>
            <person name="Friesen J.D."/>
            <person name="Fritz C."/>
            <person name="Goffeau A."/>
            <person name="Hall J."/>
            <person name="Hebling U."/>
            <person name="Heumann K."/>
            <person name="Hilbert H."/>
            <person name="Hillier L.W."/>
            <person name="Hunicke-Smith S."/>
            <person name="Hyman R.W."/>
            <person name="Johnston M."/>
            <person name="Kalman S."/>
            <person name="Kleine K."/>
            <person name="Komp C."/>
            <person name="Kurdi O."/>
            <person name="Lashkari D."/>
            <person name="Lew H."/>
            <person name="Lin A."/>
            <person name="Lin D."/>
            <person name="Louis E.J."/>
            <person name="Marathe R."/>
            <person name="Messenguy F."/>
            <person name="Mewes H.-W."/>
            <person name="Mirtipati S."/>
            <person name="Moestl D."/>
            <person name="Mueller-Auer S."/>
            <person name="Namath A."/>
            <person name="Nentwich U."/>
            <person name="Oefner P."/>
            <person name="Pearson D."/>
            <person name="Petel F.X."/>
            <person name="Pohl T.M."/>
            <person name="Purnelle B."/>
            <person name="Rajandream M.A."/>
            <person name="Rechmann S."/>
            <person name="Rieger M."/>
            <person name="Riles L."/>
            <person name="Roberts D."/>
            <person name="Schaefer M."/>
            <person name="Scharfe M."/>
            <person name="Scherens B."/>
            <person name="Schramm S."/>
            <person name="Schroeder M."/>
            <person name="Sdicu A.-M."/>
            <person name="Tettelin H."/>
            <person name="Urrestarazu L.A."/>
            <person name="Ushinsky S."/>
            <person name="Vierendeels F."/>
            <person name="Vissers S."/>
            <person name="Voss H."/>
            <person name="Walsh S.V."/>
            <person name="Wambutt R."/>
            <person name="Wang Y."/>
            <person name="Wedler E."/>
            <person name="Wedler H."/>
            <person name="Winnett E."/>
            <person name="Zhong W.-W."/>
            <person name="Zollner A."/>
            <person name="Vo D.H."/>
            <person name="Hani J."/>
        </authorList>
    </citation>
    <scope>NUCLEOTIDE SEQUENCE [LARGE SCALE GENOMIC DNA]</scope>
    <source>
        <strain>ATCC 204508 / S288c</strain>
    </source>
</reference>
<reference key="2">
    <citation type="journal article" date="2014" name="G3 (Bethesda)">
        <title>The reference genome sequence of Saccharomyces cerevisiae: Then and now.</title>
        <authorList>
            <person name="Engel S.R."/>
            <person name="Dietrich F.S."/>
            <person name="Fisk D.G."/>
            <person name="Binkley G."/>
            <person name="Balakrishnan R."/>
            <person name="Costanzo M.C."/>
            <person name="Dwight S.S."/>
            <person name="Hitz B.C."/>
            <person name="Karra K."/>
            <person name="Nash R.S."/>
            <person name="Weng S."/>
            <person name="Wong E.D."/>
            <person name="Lloyd P."/>
            <person name="Skrzypek M.S."/>
            <person name="Miyasato S.R."/>
            <person name="Simison M."/>
            <person name="Cherry J.M."/>
        </authorList>
    </citation>
    <scope>GENOME REANNOTATION</scope>
    <source>
        <strain>ATCC 204508 / S288c</strain>
    </source>
</reference>
<reference key="3">
    <citation type="journal article" date="1996" name="Genes Dev.">
        <title>Two novel targets of the MAP kinase Kss1 are negative regulators of invasive growth in the yeast Saccharomyces cerevisiae.</title>
        <authorList>
            <person name="Cook J.G."/>
            <person name="Bardwell L."/>
            <person name="Kron S.J."/>
            <person name="Thorner J."/>
        </authorList>
    </citation>
    <scope>FUNCTION</scope>
    <scope>INTERACTION WITH STE12 AND KSS1</scope>
    <scope>PHOSPHORYLATION BY KSS1</scope>
</reference>
<reference key="4">
    <citation type="journal article" date="1997" name="Curr. Biol.">
        <title>Regulation of the mating pheromone and invasive growth responses in yeast by two MAP kinase substrates.</title>
        <authorList>
            <person name="Tedford K."/>
            <person name="Kim S."/>
            <person name="Sa D."/>
            <person name="Stevens K."/>
            <person name="Tyers M."/>
        </authorList>
    </citation>
    <scope>FUNCTION</scope>
    <scope>COMPLEX WITH DIG2; FUS3 AND STE12</scope>
    <scope>INTERACTION WITH CLN1 AND CLN2</scope>
</reference>
<reference key="5">
    <citation type="journal article" date="1998" name="Genes Dev.">
        <title>Repression of yeast Ste12 transcription factor by direct binding of unphosphorylated Kss1 MAPK and its regulation by the Ste7 MEK.</title>
        <authorList>
            <person name="Bardwell L."/>
            <person name="Cook J.G."/>
            <person name="Voora D."/>
            <person name="Baggott D.M."/>
            <person name="Martinez A.R."/>
            <person name="Thorner J."/>
        </authorList>
    </citation>
    <scope>FUNCTION</scope>
    <scope>COMPLEX WITH DIG2; KSS1 AND STE12</scope>
</reference>
<reference key="6">
    <citation type="journal article" date="1998" name="Proc. Natl. Acad. Sci. U.S.A.">
        <title>Differential regulation of transcription: repression by unactivated mitogen-activated protein kinase Kss1 requires the Dig1 and Dig2 proteins.</title>
        <authorList>
            <person name="Bardwell L."/>
            <person name="Cook J.G."/>
            <person name="Zhu-Shimoni J.X."/>
            <person name="Voora D."/>
            <person name="Thorner J."/>
        </authorList>
    </citation>
    <scope>FUNCTION</scope>
</reference>
<reference key="7">
    <citation type="journal article" date="2000" name="Mol. Cell. Biol.">
        <title>Two regulators of Ste12p inhibit pheromone-responsive transcription by separate mechanisms.</title>
        <authorList>
            <person name="Olson K.A."/>
            <person name="Nelson C."/>
            <person name="Tai G."/>
            <person name="Hung W."/>
            <person name="Yong C."/>
            <person name="Astell C."/>
            <person name="Sadowski I."/>
        </authorList>
    </citation>
    <scope>FUNCTION</scope>
    <scope>INTERACTION WITH STE12</scope>
</reference>
<reference key="8">
    <citation type="journal article" date="2002" name="Mol. Microbiol.">
        <title>Rst1 and Rst2 are required for the a/alpha diploid cell type in yeast.</title>
        <authorList>
            <person name="Gelli A."/>
        </authorList>
    </citation>
    <scope>FUNCTION</scope>
    <scope>PHOSPHORYLATION BY FUS3</scope>
    <scope>REPRESSION OF HAPLOID SPECIFIC AND A-SPECIFIC GENES</scope>
</reference>
<reference key="9">
    <citation type="journal article" date="2003" name="Cell">
        <title>Program-specific distribution of a transcription factor dependent on partner transcription factor and MAPK signaling.</title>
        <authorList>
            <person name="Zeitlinger J."/>
            <person name="Simon I."/>
            <person name="Harbison C.T."/>
            <person name="Hannett N.M."/>
            <person name="Volkert T.L."/>
            <person name="Fink G.R."/>
            <person name="Young R.A."/>
        </authorList>
    </citation>
    <scope>FUNCTION</scope>
    <scope>INTERACTION WITH STE12</scope>
</reference>
<reference key="10">
    <citation type="journal article" date="2003" name="Nature">
        <title>Global analysis of protein expression in yeast.</title>
        <authorList>
            <person name="Ghaemmaghami S."/>
            <person name="Huh W.-K."/>
            <person name="Bower K."/>
            <person name="Howson R.W."/>
            <person name="Belle A."/>
            <person name="Dephoure N."/>
            <person name="O'Shea E.K."/>
            <person name="Weissman J.S."/>
        </authorList>
    </citation>
    <scope>LEVEL OF PROTEIN EXPRESSION [LARGE SCALE ANALYSIS]</scope>
</reference>
<reference key="11">
    <citation type="journal article" date="2005" name="Mol. Cell. Proteomics">
        <title>Quantitative phosphoproteomics applied to the yeast pheromone signaling pathway.</title>
        <authorList>
            <person name="Gruhler A."/>
            <person name="Olsen J.V."/>
            <person name="Mohammed S."/>
            <person name="Mortensen P."/>
            <person name="Faergeman N.J."/>
            <person name="Mann M."/>
            <person name="Jensen O.N."/>
        </authorList>
    </citation>
    <scope>PHOSPHORYLATION [LARGE SCALE ANALYSIS] AT SER-395</scope>
    <scope>IDENTIFICATION BY MASS SPECTROMETRY [LARGE SCALE ANALYSIS]</scope>
    <source>
        <strain>YAL6B</strain>
    </source>
</reference>
<reference key="12">
    <citation type="journal article" date="2007" name="J. Proteome Res.">
        <title>Large-scale phosphorylation analysis of alpha-factor-arrested Saccharomyces cerevisiae.</title>
        <authorList>
            <person name="Li X."/>
            <person name="Gerber S.A."/>
            <person name="Rudner A.D."/>
            <person name="Beausoleil S.A."/>
            <person name="Haas W."/>
            <person name="Villen J."/>
            <person name="Elias J.E."/>
            <person name="Gygi S.P."/>
        </authorList>
    </citation>
    <scope>PHOSPHORYLATION [LARGE SCALE ANALYSIS] AT SER-272 AND SER-275</scope>
    <scope>IDENTIFICATION BY MASS SPECTROMETRY [LARGE SCALE ANALYSIS]</scope>
    <source>
        <strain>ADR376</strain>
    </source>
</reference>
<reference key="13">
    <citation type="journal article" date="2008" name="Mol. Cell. Proteomics">
        <title>A multidimensional chromatography technology for in-depth phosphoproteome analysis.</title>
        <authorList>
            <person name="Albuquerque C.P."/>
            <person name="Smolka M.B."/>
            <person name="Payne S.H."/>
            <person name="Bafna V."/>
            <person name="Eng J."/>
            <person name="Zhou H."/>
        </authorList>
    </citation>
    <scope>PHOSPHORYLATION [LARGE SCALE ANALYSIS] AT SER-142; SER-272; SER-330 AND SER-428</scope>
    <scope>IDENTIFICATION BY MASS SPECTROMETRY [LARGE SCALE ANALYSIS]</scope>
</reference>
<reference key="14">
    <citation type="journal article" date="2009" name="Science">
        <title>Global analysis of Cdk1 substrate phosphorylation sites provides insights into evolution.</title>
        <authorList>
            <person name="Holt L.J."/>
            <person name="Tuch B.B."/>
            <person name="Villen J."/>
            <person name="Johnson A.D."/>
            <person name="Gygi S.P."/>
            <person name="Morgan D.O."/>
        </authorList>
    </citation>
    <scope>PHOSPHORYLATION [LARGE SCALE ANALYSIS] AT SER-45; SER-126; SER-272 AND THR-379</scope>
    <scope>IDENTIFICATION BY MASS SPECTROMETRY [LARGE SCALE ANALYSIS]</scope>
</reference>
<gene>
    <name type="primary">DIG1</name>
    <name type="synonym">RST1</name>
    <name type="ordered locus">YPL049C</name>
    <name type="ORF">P7102.02</name>
</gene>
<sequence length="452" mass="49356">MAVSARLRTTAEDTSIAKSTQDPIGDTEISVANAKGSSDSNIKNSPGGNSVGQESELEHVPEEDDSGDKEADHEDSETATAKKRKAQPLKNPKKSLKRGRVPAPLNLSDSNTNTHGGNIKDGNLASSNSAHFPPVANQNVKSAPAQVTQHSKFQPRVQYLGKASSRQSIQVNNSSNSYGKPHMPSAGIMSAMNPYMPMNRYIMSPYYNPYGIPPPHMLNKPIMTPYVSYPYPMGPRTSIPYAMQGGNARPYEENEYSASNYRNKRVNDSYDSPLSGTASTGKTRRSEEGSRNSSVGSSANAGPTQQRADLRPADMIPAEEYHFERDALLSANTKARSASTSTSTSTSTNRDRSSWHEAEPNKDEEEGTDLAIEDGAVPTPTFTTFQRTSQPQQQSPSLLQGEIRLSSHIFAFEFPLSSSNVDKKMFMSICNKVWNESKELTKKSSSHHRTGK</sequence>
<comment type="function">
    <text evidence="2 3 4 6 7 8 9">DIG1 and DIG2 are negative regulators of the filamentation and pheromone induced mating program. DIG1 and DIG2 inhibit the transcriptional activity of STE12 by direct protein-protein interaction. DIG1 colocalizes to promoters with STE12 and redistributes with it during induction of filamentation (by butanol) or mating (by pheromone) to program specific genes, but binding of DIG1 to STE12 is reduced by pheromone treatment.</text>
</comment>
<comment type="subunit">
    <text>Forms a complex with DIG2, STE12 and either FUS3 or KSS1. The interaction of FUS3 with STE12 depends on the presence of both DIG1 and DIG2. STE12 is lost from FUS3/DIG1/DIG2 complex after pheromone treatment. DIG1 and DIG2 have also been reported to interact with CLN1 and CLN2.</text>
</comment>
<comment type="interaction">
    <interactant intactId="EBI-29752">
        <id>Q03063</id>
    </interactant>
    <interactant intactId="EBI-34019">
        <id>Q03373</id>
        <label>DIG2</label>
    </interactant>
    <organismsDiffer>false</organismsDiffer>
    <experiments>6</experiments>
</comment>
<comment type="interaction">
    <interactant intactId="EBI-29752">
        <id>Q03063</id>
    </interactant>
    <interactant intactId="EBI-9945">
        <id>P14681</id>
        <label>KSS1</label>
    </interactant>
    <organismsDiffer>false</organismsDiffer>
    <experiments>5</experiments>
</comment>
<comment type="interaction">
    <interactant intactId="EBI-29752">
        <id>Q03063</id>
    </interactant>
    <interactant intactId="EBI-18264">
        <id>P13574</id>
        <label>STE12</label>
    </interactant>
    <organismsDiffer>false</organismsDiffer>
    <experiments>7</experiments>
</comment>
<comment type="subcellular location">
    <subcellularLocation>
        <location>Nucleus</location>
    </subcellularLocation>
</comment>
<comment type="PTM">
    <text evidence="3 6">Phosphorylated by FUS3 and KSS1, in a pheromone-stimulated manner. Phosphorylation reduces the affinity for STE12.</text>
</comment>
<comment type="miscellaneous">
    <text evidence="5">Present with 5000 molecules/cell in log phase SD medium (5480 according to TAP-tag study).</text>
</comment>
<organism>
    <name type="scientific">Saccharomyces cerevisiae (strain ATCC 204508 / S288c)</name>
    <name type="common">Baker's yeast</name>
    <dbReference type="NCBI Taxonomy" id="559292"/>
    <lineage>
        <taxon>Eukaryota</taxon>
        <taxon>Fungi</taxon>
        <taxon>Dikarya</taxon>
        <taxon>Ascomycota</taxon>
        <taxon>Saccharomycotina</taxon>
        <taxon>Saccharomycetes</taxon>
        <taxon>Saccharomycetales</taxon>
        <taxon>Saccharomycetaceae</taxon>
        <taxon>Saccharomyces</taxon>
    </lineage>
</organism>
<protein>
    <recommendedName>
        <fullName>Down-regulator of invasive growth 1</fullName>
    </recommendedName>
    <alternativeName>
        <fullName>Regulator of STE12 protein 1</fullName>
    </alternativeName>
    <alternativeName>
        <fullName>Regulator of sterile twelve 1</fullName>
    </alternativeName>
</protein>
<keyword id="KW-0539">Nucleus</keyword>
<keyword id="KW-0597">Phosphoprotein</keyword>
<keyword id="KW-1185">Reference proteome</keyword>
<dbReference type="EMBL" id="U44030">
    <property type="protein sequence ID" value="AAB68172.1"/>
    <property type="molecule type" value="Genomic_DNA"/>
</dbReference>
<dbReference type="EMBL" id="BK006949">
    <property type="protein sequence ID" value="DAA11381.1"/>
    <property type="molecule type" value="Genomic_DNA"/>
</dbReference>
<dbReference type="PIR" id="S62027">
    <property type="entry name" value="S62027"/>
</dbReference>
<dbReference type="RefSeq" id="NP_015276.1">
    <property type="nucleotide sequence ID" value="NM_001183863.1"/>
</dbReference>
<dbReference type="BioGRID" id="36131">
    <property type="interactions" value="248"/>
</dbReference>
<dbReference type="ComplexPortal" id="CPX-575">
    <property type="entry name" value="Ste12/Dig1/Dig2 transcription regulation complex"/>
</dbReference>
<dbReference type="ComplexPortal" id="CPX-576">
    <property type="entry name" value="Tec1/Ste12/Dig1 transcription regulation complex"/>
</dbReference>
<dbReference type="DIP" id="DIP-1291N"/>
<dbReference type="FunCoup" id="Q03063">
    <property type="interactions" value="722"/>
</dbReference>
<dbReference type="IntAct" id="Q03063">
    <property type="interactions" value="71"/>
</dbReference>
<dbReference type="MINT" id="Q03063"/>
<dbReference type="STRING" id="4932.YPL049C"/>
<dbReference type="GlyGen" id="Q03063">
    <property type="glycosylation" value="4 sites, 1 O-linked glycan (3 sites)"/>
</dbReference>
<dbReference type="iPTMnet" id="Q03063"/>
<dbReference type="PaxDb" id="4932-YPL049C"/>
<dbReference type="PeptideAtlas" id="Q03063"/>
<dbReference type="EnsemblFungi" id="YPL049C_mRNA">
    <property type="protein sequence ID" value="YPL049C"/>
    <property type="gene ID" value="YPL049C"/>
</dbReference>
<dbReference type="GeneID" id="856058"/>
<dbReference type="KEGG" id="sce:YPL049C"/>
<dbReference type="AGR" id="SGD:S000005970"/>
<dbReference type="SGD" id="S000005970">
    <property type="gene designation" value="DIG1"/>
</dbReference>
<dbReference type="VEuPathDB" id="FungiDB:YPL049C"/>
<dbReference type="eggNOG" id="ENOG502S5RS">
    <property type="taxonomic scope" value="Eukaryota"/>
</dbReference>
<dbReference type="HOGENOM" id="CLU_621344_0_0_1"/>
<dbReference type="InParanoid" id="Q03063"/>
<dbReference type="OMA" id="RSSWHEA"/>
<dbReference type="OrthoDB" id="4041625at2759"/>
<dbReference type="BioCyc" id="YEAST:G3O-33962-MONOMER"/>
<dbReference type="BioGRID-ORCS" id="856058">
    <property type="hits" value="5 hits in 10 CRISPR screens"/>
</dbReference>
<dbReference type="PRO" id="PR:Q03063"/>
<dbReference type="Proteomes" id="UP000002311">
    <property type="component" value="Chromosome XVI"/>
</dbReference>
<dbReference type="RNAct" id="Q03063">
    <property type="molecule type" value="protein"/>
</dbReference>
<dbReference type="GO" id="GO:0005634">
    <property type="term" value="C:nucleus"/>
    <property type="evidence" value="ECO:0000314"/>
    <property type="project" value="SGD"/>
</dbReference>
<dbReference type="GO" id="GO:1990526">
    <property type="term" value="C:Ste12p-Dig1p-Dig2p complex"/>
    <property type="evidence" value="ECO:0000314"/>
    <property type="project" value="SGD"/>
</dbReference>
<dbReference type="GO" id="GO:1990527">
    <property type="term" value="C:Tec1p-Ste12p-Dig1p complex"/>
    <property type="evidence" value="ECO:0000314"/>
    <property type="project" value="SGD"/>
</dbReference>
<dbReference type="GO" id="GO:0003714">
    <property type="term" value="F:transcription corepressor activity"/>
    <property type="evidence" value="ECO:0000314"/>
    <property type="project" value="SGD"/>
</dbReference>
<dbReference type="GO" id="GO:0071444">
    <property type="term" value="P:cellular response to pheromone"/>
    <property type="evidence" value="ECO:0000316"/>
    <property type="project" value="SGD"/>
</dbReference>
<dbReference type="GO" id="GO:2000218">
    <property type="term" value="P:negative regulation of invasive growth in response to glucose limitation"/>
    <property type="evidence" value="ECO:0000316"/>
    <property type="project" value="SGD"/>
</dbReference>
<dbReference type="GO" id="GO:0045894">
    <property type="term" value="P:negative regulation of mating-type specific transcription, DNA-templated"/>
    <property type="evidence" value="ECO:0000303"/>
    <property type="project" value="ComplexPortal"/>
</dbReference>
<dbReference type="GO" id="GO:2000221">
    <property type="term" value="P:negative regulation of pseudohyphal growth"/>
    <property type="evidence" value="ECO:0000316"/>
    <property type="project" value="SGD"/>
</dbReference>
<dbReference type="GO" id="GO:0000122">
    <property type="term" value="P:negative regulation of transcription by RNA polymerase II"/>
    <property type="evidence" value="ECO:0000316"/>
    <property type="project" value="SGD"/>
</dbReference>
<dbReference type="GO" id="GO:0010570">
    <property type="term" value="P:regulation of filamentous growth"/>
    <property type="evidence" value="ECO:0000303"/>
    <property type="project" value="ComplexPortal"/>
</dbReference>
<accession>Q03063</accession>
<accession>D6W3W5</accession>